<gene>
    <name evidence="1" type="primary">slyX</name>
    <name type="ordered locus">SCH_3388</name>
</gene>
<reference key="1">
    <citation type="journal article" date="2005" name="Nucleic Acids Res.">
        <title>The genome sequence of Salmonella enterica serovar Choleraesuis, a highly invasive and resistant zoonotic pathogen.</title>
        <authorList>
            <person name="Chiu C.-H."/>
            <person name="Tang P."/>
            <person name="Chu C."/>
            <person name="Hu S."/>
            <person name="Bao Q."/>
            <person name="Yu J."/>
            <person name="Chou Y.-Y."/>
            <person name="Wang H.-S."/>
            <person name="Lee Y.-S."/>
        </authorList>
    </citation>
    <scope>NUCLEOTIDE SEQUENCE [LARGE SCALE GENOMIC DNA]</scope>
    <source>
        <strain>SC-B67</strain>
    </source>
</reference>
<evidence type="ECO:0000255" key="1">
    <source>
        <dbReference type="HAMAP-Rule" id="MF_00715"/>
    </source>
</evidence>
<evidence type="ECO:0000256" key="2">
    <source>
        <dbReference type="SAM" id="MobiDB-lite"/>
    </source>
</evidence>
<comment type="similarity">
    <text evidence="1">Belongs to the SlyX family.</text>
</comment>
<accession>Q57J18</accession>
<organism>
    <name type="scientific">Salmonella choleraesuis (strain SC-B67)</name>
    <dbReference type="NCBI Taxonomy" id="321314"/>
    <lineage>
        <taxon>Bacteria</taxon>
        <taxon>Pseudomonadati</taxon>
        <taxon>Pseudomonadota</taxon>
        <taxon>Gammaproteobacteria</taxon>
        <taxon>Enterobacterales</taxon>
        <taxon>Enterobacteriaceae</taxon>
        <taxon>Salmonella</taxon>
    </lineage>
</organism>
<protein>
    <recommendedName>
        <fullName evidence="1">Protein SlyX</fullName>
    </recommendedName>
</protein>
<sequence>MQDITMEARLAELESRLAFQEITIEELNLTVTAHEMEMAKLRDHLRLLTEKLKASQPSNIASQAEETPPPHY</sequence>
<feature type="chain" id="PRO_0000227080" description="Protein SlyX">
    <location>
        <begin position="1"/>
        <end position="72"/>
    </location>
</feature>
<feature type="region of interest" description="Disordered" evidence="2">
    <location>
        <begin position="53"/>
        <end position="72"/>
    </location>
</feature>
<feature type="compositionally biased region" description="Polar residues" evidence="2">
    <location>
        <begin position="55"/>
        <end position="65"/>
    </location>
</feature>
<name>SLYX_SALCH</name>
<proteinExistence type="inferred from homology"/>
<dbReference type="EMBL" id="AE017220">
    <property type="protein sequence ID" value="AAX67294.1"/>
    <property type="molecule type" value="Genomic_DNA"/>
</dbReference>
<dbReference type="RefSeq" id="WP_001152701.1">
    <property type="nucleotide sequence ID" value="NC_006905.1"/>
</dbReference>
<dbReference type="SMR" id="Q57J18"/>
<dbReference type="KEGG" id="sec:SCH_3388"/>
<dbReference type="HOGENOM" id="CLU_180796_4_2_6"/>
<dbReference type="Proteomes" id="UP000000538">
    <property type="component" value="Chromosome"/>
</dbReference>
<dbReference type="Gene3D" id="1.20.5.300">
    <property type="match status" value="1"/>
</dbReference>
<dbReference type="HAMAP" id="MF_00715">
    <property type="entry name" value="SlyX"/>
    <property type="match status" value="1"/>
</dbReference>
<dbReference type="InterPro" id="IPR007236">
    <property type="entry name" value="SlyX"/>
</dbReference>
<dbReference type="NCBIfam" id="NF002750">
    <property type="entry name" value="PRK02793.1"/>
    <property type="match status" value="1"/>
</dbReference>
<dbReference type="PANTHER" id="PTHR36508">
    <property type="entry name" value="PROTEIN SLYX"/>
    <property type="match status" value="1"/>
</dbReference>
<dbReference type="PANTHER" id="PTHR36508:SF1">
    <property type="entry name" value="PROTEIN SLYX"/>
    <property type="match status" value="1"/>
</dbReference>
<dbReference type="Pfam" id="PF04102">
    <property type="entry name" value="SlyX"/>
    <property type="match status" value="1"/>
</dbReference>